<organism evidence="5">
    <name type="scientific">Anopheles darlingi</name>
    <name type="common">Mosquito</name>
    <dbReference type="NCBI Taxonomy" id="43151"/>
    <lineage>
        <taxon>Eukaryota</taxon>
        <taxon>Metazoa</taxon>
        <taxon>Ecdysozoa</taxon>
        <taxon>Arthropoda</taxon>
        <taxon>Hexapoda</taxon>
        <taxon>Insecta</taxon>
        <taxon>Pterygota</taxon>
        <taxon>Neoptera</taxon>
        <taxon>Endopterygota</taxon>
        <taxon>Diptera</taxon>
        <taxon>Nematocera</taxon>
        <taxon>Culicoidea</taxon>
        <taxon>Culicidae</taxon>
        <taxon>Anophelinae</taxon>
        <taxon>Anopheles</taxon>
    </lineage>
</organism>
<protein>
    <recommendedName>
        <fullName evidence="5">gSG7 salivary protein</fullName>
    </recommendedName>
</protein>
<name>GSG7_ANODA</name>
<reference evidence="5" key="1">
    <citation type="journal article" date="2009" name="BMC Genomics">
        <title>The salivary gland transcriptome of the neotropical malaria vector Anopheles darlingi reveals accelerated evolution of genes relevant to hematophagy.</title>
        <authorList>
            <person name="Calvo E."/>
            <person name="Pham V.M."/>
            <person name="Marinotti O."/>
            <person name="Andersen J.F."/>
            <person name="Ribeiro J.M.C."/>
        </authorList>
    </citation>
    <scope>NUCLEOTIDE SEQUENCE [LARGE SCALE MRNA]</scope>
    <source>
        <tissue evidence="5">Salivary gland</tissue>
    </source>
</reference>
<reference evidence="4" key="2">
    <citation type="journal article" date="2016" name="J. Immunol.">
        <title>An Inhibitor of the Alternative Pathway of Complement in Saliva of New World Anopheline Mosquitoes.</title>
        <authorList>
            <person name="Mendes-Sousa A.F."/>
            <person name="Queiroz D.C."/>
            <person name="Vale V.F."/>
            <person name="Ribeiro J.M."/>
            <person name="Valenzuela J.G."/>
            <person name="Gontijo N.F."/>
            <person name="Andersen J.F."/>
        </authorList>
    </citation>
    <scope>FUNCTION</scope>
</reference>
<comment type="function">
    <text evidence="3">Salivary protein that moderately inhibits the alternative pathway for complement system activation in the host.</text>
</comment>
<comment type="subcellular location">
    <subcellularLocation>
        <location evidence="4">Secreted</location>
    </subcellularLocation>
</comment>
<feature type="signal peptide" evidence="2">
    <location>
        <begin position="1"/>
        <end position="26"/>
    </location>
</feature>
<feature type="chain" id="PRO_5002841739" description="gSG7 salivary protein" evidence="2">
    <location>
        <begin position="27"/>
        <end position="142"/>
    </location>
</feature>
<feature type="disulfide bond" evidence="1">
    <location>
        <begin position="84"/>
        <end position="139"/>
    </location>
</feature>
<feature type="disulfide bond" evidence="1">
    <location>
        <begin position="107"/>
        <end position="117"/>
    </location>
</feature>
<keyword id="KW-1216">Complement system impairing toxin</keyword>
<keyword id="KW-1015">Disulfide bond</keyword>
<keyword id="KW-1185">Reference proteome</keyword>
<keyword id="KW-0964">Secreted</keyword>
<keyword id="KW-0732">Signal</keyword>
<keyword id="KW-0800">Toxin</keyword>
<proteinExistence type="evidence at transcript level"/>
<sequence>MAARMTIMLPLAVALICLLQTEPGMAAHSHIRKVLQLFRSIELDDSKKSFYLTAAKYGIQTQLREPLVRFAGGFAPSTRLSEACVKNAIARIYEIEGEFYAKFSYACENHDPYSVECLEEAQDDYPTKLGELFKKTKKCLRE</sequence>
<dbReference type="EMBL" id="EU934364">
    <property type="protein sequence ID" value="ACI30142.1"/>
    <property type="molecule type" value="mRNA"/>
</dbReference>
<dbReference type="SMR" id="B6DDZ5"/>
<dbReference type="VEuPathDB" id="VectorBase:ADAC002979"/>
<dbReference type="VEuPathDB" id="VectorBase:ADAR2_001452"/>
<dbReference type="Proteomes" id="UP000000673">
    <property type="component" value="Unplaced"/>
</dbReference>
<dbReference type="GO" id="GO:0005576">
    <property type="term" value="C:extracellular region"/>
    <property type="evidence" value="ECO:0007669"/>
    <property type="project" value="UniProtKB-SubCell"/>
</dbReference>
<dbReference type="GO" id="GO:0090729">
    <property type="term" value="F:toxin activity"/>
    <property type="evidence" value="ECO:0007669"/>
    <property type="project" value="UniProtKB-KW"/>
</dbReference>
<dbReference type="InterPro" id="IPR056799">
    <property type="entry name" value="ALL3/gSG7_salivary-like_helix"/>
</dbReference>
<dbReference type="Pfam" id="PF25001">
    <property type="entry name" value="Aegyptin_C"/>
    <property type="match status" value="1"/>
</dbReference>
<evidence type="ECO:0000250" key="1">
    <source>
        <dbReference type="UniProtKB" id="A0A1Y9G8D0"/>
    </source>
</evidence>
<evidence type="ECO:0000255" key="2"/>
<evidence type="ECO:0000269" key="3">
    <source>
    </source>
</evidence>
<evidence type="ECO:0000305" key="4"/>
<evidence type="ECO:0000312" key="5">
    <source>
        <dbReference type="EMBL" id="ACI30142.1"/>
    </source>
</evidence>
<accession>B6DDZ5</accession>